<keyword id="KW-0067">ATP-binding</keyword>
<keyword id="KW-0143">Chaperone</keyword>
<keyword id="KW-0963">Cytoplasm</keyword>
<keyword id="KW-0413">Isomerase</keyword>
<keyword id="KW-0547">Nucleotide-binding</keyword>
<keyword id="KW-0346">Stress response</keyword>
<name>CH601_CHLPN</name>
<dbReference type="EC" id="5.6.1.7" evidence="1"/>
<dbReference type="EMBL" id="M69217">
    <property type="protein sequence ID" value="AAA23126.1"/>
    <property type="molecule type" value="Genomic_DNA"/>
</dbReference>
<dbReference type="EMBL" id="AE001363">
    <property type="protein sequence ID" value="AAD18287.1"/>
    <property type="molecule type" value="Genomic_DNA"/>
</dbReference>
<dbReference type="EMBL" id="AE002161">
    <property type="protein sequence ID" value="AAF38453.1"/>
    <property type="molecule type" value="Genomic_DNA"/>
</dbReference>
<dbReference type="EMBL" id="BA000008">
    <property type="protein sequence ID" value="BAA98344.1"/>
    <property type="molecule type" value="Genomic_DNA"/>
</dbReference>
<dbReference type="EMBL" id="AE009440">
    <property type="protein sequence ID" value="AAP98068.1"/>
    <property type="molecule type" value="Genomic_DNA"/>
</dbReference>
<dbReference type="PIR" id="B81556">
    <property type="entry name" value="B81556"/>
</dbReference>
<dbReference type="PIR" id="F86507">
    <property type="entry name" value="F86507"/>
</dbReference>
<dbReference type="PIR" id="S19023">
    <property type="entry name" value="S19023"/>
</dbReference>
<dbReference type="RefSeq" id="NP_224342.1">
    <property type="nucleotide sequence ID" value="NC_000922.1"/>
</dbReference>
<dbReference type="SMR" id="P31681"/>
<dbReference type="STRING" id="406984.CPK_ORF00646"/>
<dbReference type="MoonProt" id="P31681"/>
<dbReference type="GeneID" id="45050179"/>
<dbReference type="KEGG" id="cpa:CP_0638"/>
<dbReference type="KEGG" id="cpj:groEL_1"/>
<dbReference type="KEGG" id="cpn:CPn_0134"/>
<dbReference type="KEGG" id="cpt:CpB0135"/>
<dbReference type="PATRIC" id="fig|115713.3.peg.151"/>
<dbReference type="eggNOG" id="COG0459">
    <property type="taxonomic scope" value="Bacteria"/>
</dbReference>
<dbReference type="HOGENOM" id="CLU_016503_3_0_0"/>
<dbReference type="OrthoDB" id="9766614at2"/>
<dbReference type="Proteomes" id="UP000000583">
    <property type="component" value="Chromosome"/>
</dbReference>
<dbReference type="Proteomes" id="UP000000801">
    <property type="component" value="Chromosome"/>
</dbReference>
<dbReference type="GO" id="GO:0009986">
    <property type="term" value="C:cell surface"/>
    <property type="evidence" value="ECO:0000314"/>
    <property type="project" value="CAFA"/>
</dbReference>
<dbReference type="GO" id="GO:0005737">
    <property type="term" value="C:cytoplasm"/>
    <property type="evidence" value="ECO:0007669"/>
    <property type="project" value="UniProtKB-SubCell"/>
</dbReference>
<dbReference type="GO" id="GO:0020003">
    <property type="term" value="C:symbiont-containing vacuole"/>
    <property type="evidence" value="ECO:0000314"/>
    <property type="project" value="CAFA"/>
</dbReference>
<dbReference type="GO" id="GO:0005524">
    <property type="term" value="F:ATP binding"/>
    <property type="evidence" value="ECO:0007669"/>
    <property type="project" value="UniProtKB-UniRule"/>
</dbReference>
<dbReference type="GO" id="GO:0140662">
    <property type="term" value="F:ATP-dependent protein folding chaperone"/>
    <property type="evidence" value="ECO:0007669"/>
    <property type="project" value="InterPro"/>
</dbReference>
<dbReference type="GO" id="GO:0016853">
    <property type="term" value="F:isomerase activity"/>
    <property type="evidence" value="ECO:0007669"/>
    <property type="project" value="UniProtKB-KW"/>
</dbReference>
<dbReference type="GO" id="GO:0051082">
    <property type="term" value="F:unfolded protein binding"/>
    <property type="evidence" value="ECO:0007669"/>
    <property type="project" value="UniProtKB-UniRule"/>
</dbReference>
<dbReference type="GO" id="GO:1901224">
    <property type="term" value="P:positive regulation of non-canonical NF-kappaB signal transduction"/>
    <property type="evidence" value="ECO:0000314"/>
    <property type="project" value="CAFA"/>
</dbReference>
<dbReference type="GO" id="GO:0042026">
    <property type="term" value="P:protein refolding"/>
    <property type="evidence" value="ECO:0007669"/>
    <property type="project" value="UniProtKB-UniRule"/>
</dbReference>
<dbReference type="GO" id="GO:2000535">
    <property type="term" value="P:regulation of entry of bacterium into host cell"/>
    <property type="evidence" value="ECO:0000314"/>
    <property type="project" value="CAFA"/>
</dbReference>
<dbReference type="CDD" id="cd03344">
    <property type="entry name" value="GroEL"/>
    <property type="match status" value="1"/>
</dbReference>
<dbReference type="FunFam" id="1.10.560.10:FF:000001">
    <property type="entry name" value="60 kDa chaperonin"/>
    <property type="match status" value="1"/>
</dbReference>
<dbReference type="FunFam" id="3.50.7.10:FF:000001">
    <property type="entry name" value="60 kDa chaperonin"/>
    <property type="match status" value="1"/>
</dbReference>
<dbReference type="Gene3D" id="3.50.7.10">
    <property type="entry name" value="GroEL"/>
    <property type="match status" value="1"/>
</dbReference>
<dbReference type="Gene3D" id="1.10.560.10">
    <property type="entry name" value="GroEL-like equatorial domain"/>
    <property type="match status" value="1"/>
</dbReference>
<dbReference type="Gene3D" id="3.30.260.10">
    <property type="entry name" value="TCP-1-like chaperonin intermediate domain"/>
    <property type="match status" value="1"/>
</dbReference>
<dbReference type="HAMAP" id="MF_00600">
    <property type="entry name" value="CH60"/>
    <property type="match status" value="1"/>
</dbReference>
<dbReference type="InterPro" id="IPR018370">
    <property type="entry name" value="Chaperonin_Cpn60_CS"/>
</dbReference>
<dbReference type="InterPro" id="IPR001844">
    <property type="entry name" value="Cpn60/GroEL"/>
</dbReference>
<dbReference type="InterPro" id="IPR002423">
    <property type="entry name" value="Cpn60/GroEL/TCP-1"/>
</dbReference>
<dbReference type="InterPro" id="IPR027409">
    <property type="entry name" value="GroEL-like_apical_dom_sf"/>
</dbReference>
<dbReference type="InterPro" id="IPR027413">
    <property type="entry name" value="GROEL-like_equatorial_sf"/>
</dbReference>
<dbReference type="InterPro" id="IPR027410">
    <property type="entry name" value="TCP-1-like_intermed_sf"/>
</dbReference>
<dbReference type="NCBIfam" id="TIGR02348">
    <property type="entry name" value="GroEL"/>
    <property type="match status" value="1"/>
</dbReference>
<dbReference type="NCBIfam" id="NF000592">
    <property type="entry name" value="PRK00013.1"/>
    <property type="match status" value="1"/>
</dbReference>
<dbReference type="NCBIfam" id="NF009487">
    <property type="entry name" value="PRK12849.1"/>
    <property type="match status" value="1"/>
</dbReference>
<dbReference type="NCBIfam" id="NF009488">
    <property type="entry name" value="PRK12850.1"/>
    <property type="match status" value="1"/>
</dbReference>
<dbReference type="NCBIfam" id="NF009489">
    <property type="entry name" value="PRK12851.1"/>
    <property type="match status" value="1"/>
</dbReference>
<dbReference type="PANTHER" id="PTHR45633">
    <property type="entry name" value="60 KDA HEAT SHOCK PROTEIN, MITOCHONDRIAL"/>
    <property type="match status" value="1"/>
</dbReference>
<dbReference type="Pfam" id="PF00118">
    <property type="entry name" value="Cpn60_TCP1"/>
    <property type="match status" value="1"/>
</dbReference>
<dbReference type="PRINTS" id="PR00298">
    <property type="entry name" value="CHAPERONIN60"/>
</dbReference>
<dbReference type="SUPFAM" id="SSF52029">
    <property type="entry name" value="GroEL apical domain-like"/>
    <property type="match status" value="1"/>
</dbReference>
<dbReference type="SUPFAM" id="SSF48592">
    <property type="entry name" value="GroEL equatorial domain-like"/>
    <property type="match status" value="1"/>
</dbReference>
<dbReference type="SUPFAM" id="SSF54849">
    <property type="entry name" value="GroEL-intermediate domain like"/>
    <property type="match status" value="1"/>
</dbReference>
<dbReference type="PROSITE" id="PS00296">
    <property type="entry name" value="CHAPERONINS_CPN60"/>
    <property type="match status" value="1"/>
</dbReference>
<organism>
    <name type="scientific">Chlamydia pneumoniae</name>
    <name type="common">Chlamydophila pneumoniae</name>
    <dbReference type="NCBI Taxonomy" id="83558"/>
    <lineage>
        <taxon>Bacteria</taxon>
        <taxon>Pseudomonadati</taxon>
        <taxon>Chlamydiota</taxon>
        <taxon>Chlamydiia</taxon>
        <taxon>Chlamydiales</taxon>
        <taxon>Chlamydiaceae</taxon>
        <taxon>Chlamydia/Chlamydophila group</taxon>
        <taxon>Chlamydia</taxon>
    </lineage>
</organism>
<comment type="function">
    <text evidence="1">Together with its co-chaperonin GroES, plays an essential role in assisting protein folding. The GroEL-GroES system forms a nano-cage that allows encapsulation of the non-native substrate proteins and provides a physical environment optimized to promote and accelerate protein folding.</text>
</comment>
<comment type="catalytic activity">
    <reaction evidence="1">
        <text>ATP + H2O + a folded polypeptide = ADP + phosphate + an unfolded polypeptide.</text>
        <dbReference type="EC" id="5.6.1.7"/>
    </reaction>
</comment>
<comment type="subunit">
    <text evidence="1">Forms a cylinder of 14 subunits composed of two heptameric rings stacked back-to-back. Interacts with the co-chaperonin GroES.</text>
</comment>
<comment type="subcellular location">
    <subcellularLocation>
        <location evidence="1">Cytoplasm</location>
    </subcellularLocation>
</comment>
<comment type="induction">
    <text>By stress.</text>
</comment>
<comment type="similarity">
    <text evidence="1">Belongs to the chaperonin (HSP60) family.</text>
</comment>
<sequence>MAAKNIKYNEEARKKIHKGVKTLAEAVKVTLGPKGRHVVIDKSFGSPQVTKDGVTVAKEIELEDKHENMGAQMVKEVASKTADKAGDGTTTATVLAEAIYSEGLRNVTAGANPMDLKRGIDKAVKVVVDELKKISKPVQHHKEIAQVATISANNDSEIGNLIAEAMEKVGKNGSITVEEAKGFETVLDVVEGMNFNRGYLSSYFSTNPETQECVLEDALILIYDKKISGIKDFLPVLQQVAESGRPLLIIAEEIEGEALATLVVNRLRAGFRVCAVKAPGFGDRRKAMLEDIAILTGGQLVSEELGMKLENTTLAMLGKAKKVIVTKEDTTIVEGLGNKPDIQARCDNIKKQIEDSTSDYDKEKLQERLAKLSGGVAVIRVGAATEIEMKEKKDRVDDAQHATIAAVEEGILPGGGTALVRCIPTLEAFLPMLANEDEAIGTRIILKALTAPLKQIASNAGKEGAIICQQVLARSANEGYDALRDAYTDMIDAGILDPTKVTRSALESAASIAGLLLTTEALIADIPEEKSSSAPAMPSAGMDY</sequence>
<proteinExistence type="evidence at transcript level"/>
<protein>
    <recommendedName>
        <fullName evidence="1">Chaperonin GroEL 1</fullName>
        <ecNumber evidence="1">5.6.1.7</ecNumber>
    </recommendedName>
    <alternativeName>
        <fullName evidence="1">60 kDa chaperonin 1</fullName>
    </alternativeName>
    <alternativeName>
        <fullName evidence="1">Chaperonin-60 1</fullName>
        <shortName evidence="1">Cpn60 1</shortName>
    </alternativeName>
</protein>
<accession>P31681</accession>
<accession>Q9JQ79</accession>
<gene>
    <name evidence="1" type="primary">groEL1</name>
    <name evidence="1" type="synonym">groL1</name>
    <name type="synonym">mopA</name>
    <name type="ordered locus">CPn_0134</name>
    <name type="ordered locus">CP_0638</name>
    <name type="ordered locus">CpB0135</name>
</gene>
<feature type="chain" id="PRO_0000063328" description="Chaperonin GroEL 1">
    <location>
        <begin position="1"/>
        <end position="544"/>
    </location>
</feature>
<feature type="binding site" evidence="1">
    <location>
        <begin position="30"/>
        <end position="33"/>
    </location>
    <ligand>
        <name>ATP</name>
        <dbReference type="ChEBI" id="CHEBI:30616"/>
    </ligand>
</feature>
<feature type="binding site" evidence="1">
    <location>
        <position position="51"/>
    </location>
    <ligand>
        <name>ATP</name>
        <dbReference type="ChEBI" id="CHEBI:30616"/>
    </ligand>
</feature>
<feature type="binding site" evidence="1">
    <location>
        <begin position="87"/>
        <end position="91"/>
    </location>
    <ligand>
        <name>ATP</name>
        <dbReference type="ChEBI" id="CHEBI:30616"/>
    </ligand>
</feature>
<feature type="binding site" evidence="1">
    <location>
        <position position="415"/>
    </location>
    <ligand>
        <name>ATP</name>
        <dbReference type="ChEBI" id="CHEBI:30616"/>
    </ligand>
</feature>
<feature type="binding site" evidence="1">
    <location>
        <begin position="481"/>
        <end position="483"/>
    </location>
    <ligand>
        <name>ATP</name>
        <dbReference type="ChEBI" id="CHEBI:30616"/>
    </ligand>
</feature>
<feature type="binding site" evidence="1">
    <location>
        <position position="497"/>
    </location>
    <ligand>
        <name>ATP</name>
        <dbReference type="ChEBI" id="CHEBI:30616"/>
    </ligand>
</feature>
<feature type="sequence conflict" description="In Ref. 1; AAA23126." evidence="2" ref="1">
    <original>A</original>
    <variation>R</variation>
    <location>
        <position position="510"/>
    </location>
</feature>
<evidence type="ECO:0000255" key="1">
    <source>
        <dbReference type="HAMAP-Rule" id="MF_00600"/>
    </source>
</evidence>
<evidence type="ECO:0000305" key="2"/>
<reference key="1">
    <citation type="journal article" date="1991" name="Infect. Immun.">
        <title>Isolation and sequence analysis of the Chlamydia pneumoniae GroE operon.</title>
        <authorList>
            <person name="Kikuta L.C."/>
            <person name="Puolakkainen M."/>
            <person name="Kuo C.C."/>
            <person name="Campbell L.A."/>
        </authorList>
    </citation>
    <scope>NUCLEOTIDE SEQUENCE [GENOMIC DNA]</scope>
    <source>
        <strain>AR39</strain>
    </source>
</reference>
<reference key="2">
    <citation type="journal article" date="1999" name="Nat. Genet.">
        <title>Comparative genomes of Chlamydia pneumoniae and C. trachomatis.</title>
        <authorList>
            <person name="Kalman S."/>
            <person name="Mitchell W.P."/>
            <person name="Marathe R."/>
            <person name="Lammel C.J."/>
            <person name="Fan J."/>
            <person name="Hyman R.W."/>
            <person name="Olinger L."/>
            <person name="Grimwood J."/>
            <person name="Davis R.W."/>
            <person name="Stephens R.S."/>
        </authorList>
    </citation>
    <scope>NUCLEOTIDE SEQUENCE [LARGE SCALE GENOMIC DNA]</scope>
    <source>
        <strain>CWL029</strain>
    </source>
</reference>
<reference key="3">
    <citation type="journal article" date="2000" name="Nucleic Acids Res.">
        <title>Genome sequences of Chlamydia trachomatis MoPn and Chlamydia pneumoniae AR39.</title>
        <authorList>
            <person name="Read T.D."/>
            <person name="Brunham R.C."/>
            <person name="Shen C."/>
            <person name="Gill S.R."/>
            <person name="Heidelberg J.F."/>
            <person name="White O."/>
            <person name="Hickey E.K."/>
            <person name="Peterson J.D."/>
            <person name="Utterback T.R."/>
            <person name="Berry K.J."/>
            <person name="Bass S."/>
            <person name="Linher K.D."/>
            <person name="Weidman J.F."/>
            <person name="Khouri H.M."/>
            <person name="Craven B."/>
            <person name="Bowman C."/>
            <person name="Dodson R.J."/>
            <person name="Gwinn M.L."/>
            <person name="Nelson W.C."/>
            <person name="DeBoy R.T."/>
            <person name="Kolonay J.F."/>
            <person name="McClarty G."/>
            <person name="Salzberg S.L."/>
            <person name="Eisen J.A."/>
            <person name="Fraser C.M."/>
        </authorList>
    </citation>
    <scope>NUCLEOTIDE SEQUENCE [LARGE SCALE GENOMIC DNA]</scope>
    <source>
        <strain>AR39</strain>
    </source>
</reference>
<reference key="4">
    <citation type="journal article" date="2000" name="Nucleic Acids Res.">
        <title>Comparison of whole genome sequences of Chlamydia pneumoniae J138 from Japan and CWL029 from USA.</title>
        <authorList>
            <person name="Shirai M."/>
            <person name="Hirakawa H."/>
            <person name="Kimoto M."/>
            <person name="Tabuchi M."/>
            <person name="Kishi F."/>
            <person name="Ouchi K."/>
            <person name="Shiba T."/>
            <person name="Ishii K."/>
            <person name="Hattori M."/>
            <person name="Kuhara S."/>
            <person name="Nakazawa T."/>
        </authorList>
    </citation>
    <scope>NUCLEOTIDE SEQUENCE [LARGE SCALE GENOMIC DNA]</scope>
    <source>
        <strain>J138</strain>
    </source>
</reference>
<reference key="5">
    <citation type="submission" date="2002-05" db="EMBL/GenBank/DDBJ databases">
        <title>The genome sequence of Chlamydia pneumoniae TW183 and comparison with other Chlamydia strains based on whole genome sequence analysis.</title>
        <authorList>
            <person name="Geng M.M."/>
            <person name="Schuhmacher A."/>
            <person name="Muehldorfer I."/>
            <person name="Bensch K.W."/>
            <person name="Schaefer K.P."/>
            <person name="Schneider S."/>
            <person name="Pohl T."/>
            <person name="Essig A."/>
            <person name="Marre R."/>
            <person name="Melchers K."/>
        </authorList>
    </citation>
    <scope>NUCLEOTIDE SEQUENCE [LARGE SCALE GENOMIC DNA]</scope>
    <source>
        <strain>TW-183</strain>
    </source>
</reference>